<reference key="1">
    <citation type="journal article" date="2007" name="PLoS ONE">
        <title>Molecular correlates of host specialization in Staphylococcus aureus.</title>
        <authorList>
            <person name="Herron-Olson L."/>
            <person name="Fitzgerald J.R."/>
            <person name="Musser J.M."/>
            <person name="Kapur V."/>
        </authorList>
    </citation>
    <scope>NUCLEOTIDE SEQUENCE [LARGE SCALE GENOMIC DNA]</scope>
    <source>
        <strain>bovine RF122 / ET3-1</strain>
    </source>
</reference>
<keyword id="KW-1003">Cell membrane</keyword>
<keyword id="KW-0406">Ion transport</keyword>
<keyword id="KW-0472">Membrane</keyword>
<keyword id="KW-0533">Nickel</keyword>
<keyword id="KW-0921">Nickel transport</keyword>
<keyword id="KW-0812">Transmembrane</keyword>
<keyword id="KW-1133">Transmembrane helix</keyword>
<keyword id="KW-0813">Transport</keyword>
<accession>Q2YXY8</accession>
<comment type="function">
    <text evidence="1">Part of the ABC transporter complex NikABCDE (Opp2) involved in nickel import. Probably responsible for the translocation of the substrate across the membrane.</text>
</comment>
<comment type="subunit">
    <text evidence="1">The complex is composed of two ATP-binding proteins (NikD and NikE), two transmembrane proteins (NikB and NikC) and a solute-binding protein (NikA).</text>
</comment>
<comment type="subcellular location">
    <subcellularLocation>
        <location evidence="3">Cell membrane</location>
        <topology evidence="2">Multi-pass membrane protein</topology>
    </subcellularLocation>
</comment>
<comment type="similarity">
    <text evidence="3">Belongs to the binding-protein-dependent transport system permease family. OppBC subfamily.</text>
</comment>
<organism>
    <name type="scientific">Staphylococcus aureus (strain bovine RF122 / ET3-1)</name>
    <dbReference type="NCBI Taxonomy" id="273036"/>
    <lineage>
        <taxon>Bacteria</taxon>
        <taxon>Bacillati</taxon>
        <taxon>Bacillota</taxon>
        <taxon>Bacilli</taxon>
        <taxon>Bacillales</taxon>
        <taxon>Staphylococcaceae</taxon>
        <taxon>Staphylococcus</taxon>
    </lineage>
</organism>
<dbReference type="EMBL" id="AJ938182">
    <property type="protein sequence ID" value="CAI80925.1"/>
    <property type="molecule type" value="Genomic_DNA"/>
</dbReference>
<dbReference type="RefSeq" id="WP_000548931.1">
    <property type="nucleotide sequence ID" value="NC_007622.1"/>
</dbReference>
<dbReference type="SMR" id="Q2YXY8"/>
<dbReference type="KEGG" id="sab:SAB1236c"/>
<dbReference type="HOGENOM" id="CLU_028518_5_3_9"/>
<dbReference type="GO" id="GO:0005886">
    <property type="term" value="C:plasma membrane"/>
    <property type="evidence" value="ECO:0007669"/>
    <property type="project" value="UniProtKB-SubCell"/>
</dbReference>
<dbReference type="GO" id="GO:0015675">
    <property type="term" value="P:nickel cation transport"/>
    <property type="evidence" value="ECO:0007669"/>
    <property type="project" value="UniProtKB-KW"/>
</dbReference>
<dbReference type="GO" id="GO:0055085">
    <property type="term" value="P:transmembrane transport"/>
    <property type="evidence" value="ECO:0007669"/>
    <property type="project" value="InterPro"/>
</dbReference>
<dbReference type="CDD" id="cd06261">
    <property type="entry name" value="TM_PBP2"/>
    <property type="match status" value="1"/>
</dbReference>
<dbReference type="Gene3D" id="1.10.3720.10">
    <property type="entry name" value="MetI-like"/>
    <property type="match status" value="1"/>
</dbReference>
<dbReference type="InterPro" id="IPR053385">
    <property type="entry name" value="ABC_transport_permease"/>
</dbReference>
<dbReference type="InterPro" id="IPR050366">
    <property type="entry name" value="BP-dependent_transpt_permease"/>
</dbReference>
<dbReference type="InterPro" id="IPR000515">
    <property type="entry name" value="MetI-like"/>
</dbReference>
<dbReference type="InterPro" id="IPR035906">
    <property type="entry name" value="MetI-like_sf"/>
</dbReference>
<dbReference type="NCBIfam" id="NF045474">
    <property type="entry name" value="Opp2C"/>
    <property type="match status" value="1"/>
</dbReference>
<dbReference type="PANTHER" id="PTHR43386:SF1">
    <property type="entry name" value="D,D-DIPEPTIDE TRANSPORT SYSTEM PERMEASE PROTEIN DDPC-RELATED"/>
    <property type="match status" value="1"/>
</dbReference>
<dbReference type="PANTHER" id="PTHR43386">
    <property type="entry name" value="OLIGOPEPTIDE TRANSPORT SYSTEM PERMEASE PROTEIN APPC"/>
    <property type="match status" value="1"/>
</dbReference>
<dbReference type="Pfam" id="PF00528">
    <property type="entry name" value="BPD_transp_1"/>
    <property type="match status" value="1"/>
</dbReference>
<dbReference type="SUPFAM" id="SSF161098">
    <property type="entry name" value="MetI-like"/>
    <property type="match status" value="1"/>
</dbReference>
<dbReference type="PROSITE" id="PS50928">
    <property type="entry name" value="ABC_TM1"/>
    <property type="match status" value="1"/>
</dbReference>
<sequence length="276" mass="31229">MHKIFSKNNLIFFVFGAFIFVMIVLQFFVSSENATKVNLSQTFEPISWLHLLGTDDYGRDLFTRIIIGARSTLFVTVLTLIAIVVIGVTLGLFAGYKKGWIERLVLRFIDVGLSIPEFIIVIALASFFQPSLWNLVISITIIKWMNYTRLTRSIVNSEMNKPYIKMAQLFHVPTRTILIRHLTPKIIPAIIVLMVVDFGKIILYISSLSFIGLGSQPPTPEWGAMLQQGRDFISSHPIMLIAPASVIAITILIFNLTGDALRDRLLKQRGEYDESH</sequence>
<protein>
    <recommendedName>
        <fullName evidence="1">Nickel import system permease protein NikC</fullName>
    </recommendedName>
</protein>
<evidence type="ECO:0000250" key="1">
    <source>
        <dbReference type="UniProtKB" id="Q2FYQ6"/>
    </source>
</evidence>
<evidence type="ECO:0000255" key="2">
    <source>
        <dbReference type="PROSITE-ProRule" id="PRU00441"/>
    </source>
</evidence>
<evidence type="ECO:0000305" key="3"/>
<feature type="chain" id="PRO_0000276783" description="Nickel import system permease protein NikC">
    <location>
        <begin position="1"/>
        <end position="276"/>
    </location>
</feature>
<feature type="transmembrane region" description="Helical" evidence="2">
    <location>
        <begin position="10"/>
        <end position="30"/>
    </location>
</feature>
<feature type="transmembrane region" description="Helical" evidence="2">
    <location>
        <begin position="73"/>
        <end position="93"/>
    </location>
</feature>
<feature type="transmembrane region" description="Helical" evidence="2">
    <location>
        <begin position="108"/>
        <end position="128"/>
    </location>
</feature>
<feature type="transmembrane region" description="Helical" evidence="2">
    <location>
        <begin position="186"/>
        <end position="206"/>
    </location>
</feature>
<feature type="transmembrane region" description="Helical" evidence="2">
    <location>
        <begin position="238"/>
        <end position="258"/>
    </location>
</feature>
<feature type="domain" description="ABC transmembrane type-1" evidence="2">
    <location>
        <begin position="69"/>
        <end position="258"/>
    </location>
</feature>
<proteinExistence type="inferred from homology"/>
<name>NIKC_STAAB</name>
<gene>
    <name evidence="1" type="primary">nikC</name>
    <name type="synonym">oppC2</name>
    <name type="ordered locus">SAB1236c</name>
</gene>